<name>U520_MOUSE</name>
<feature type="chain" id="PRO_0000422049" description="U5 small nuclear ribonucleoprotein 200 kDa helicase">
    <location>
        <begin position="1"/>
        <end position="2136"/>
    </location>
</feature>
<feature type="domain" description="Helicase ATP-binding 1" evidence="5">
    <location>
        <begin position="490"/>
        <end position="673"/>
    </location>
</feature>
<feature type="domain" description="Helicase C-terminal 1" evidence="6">
    <location>
        <begin position="684"/>
        <end position="921"/>
    </location>
</feature>
<feature type="domain" description="SEC63 1">
    <location>
        <begin position="982"/>
        <end position="1286"/>
    </location>
</feature>
<feature type="domain" description="Helicase ATP-binding 2" evidence="5">
    <location>
        <begin position="1337"/>
        <end position="1512"/>
    </location>
</feature>
<feature type="domain" description="Helicase C-terminal 2" evidence="6">
    <location>
        <begin position="1545"/>
        <end position="1753"/>
    </location>
</feature>
<feature type="domain" description="SEC63 2">
    <location>
        <begin position="1812"/>
        <end position="2124"/>
    </location>
</feature>
<feature type="region of interest" description="Disordered" evidence="7">
    <location>
        <begin position="39"/>
        <end position="81"/>
    </location>
</feature>
<feature type="region of interest" description="Interaction with C9orf78 and WBP4" evidence="3">
    <location>
        <begin position="395"/>
        <end position="2129"/>
    </location>
</feature>
<feature type="region of interest" description="Interaction with TSSC4" evidence="3">
    <location>
        <begin position="1282"/>
        <end position="2136"/>
    </location>
</feature>
<feature type="coiled-coil region" evidence="4">
    <location>
        <begin position="54"/>
        <end position="84"/>
    </location>
</feature>
<feature type="short sequence motif" description="DEAH box">
    <location>
        <begin position="615"/>
        <end position="618"/>
    </location>
</feature>
<feature type="short sequence motif" description="DEAH box">
    <location>
        <begin position="1454"/>
        <end position="1457"/>
    </location>
</feature>
<feature type="compositionally biased region" description="Basic and acidic residues" evidence="7">
    <location>
        <begin position="48"/>
        <end position="81"/>
    </location>
</feature>
<feature type="binding site" evidence="5">
    <location>
        <begin position="503"/>
        <end position="510"/>
    </location>
    <ligand>
        <name>ATP</name>
        <dbReference type="ChEBI" id="CHEBI:30616"/>
    </ligand>
</feature>
<feature type="binding site" evidence="5">
    <location>
        <begin position="1350"/>
        <end position="1357"/>
    </location>
    <ligand>
        <name>ATP</name>
        <dbReference type="ChEBI" id="CHEBI:30616"/>
    </ligand>
</feature>
<feature type="modified residue" description="Phosphoserine" evidence="3">
    <location>
        <position position="17"/>
    </location>
</feature>
<feature type="modified residue" description="Phosphoserine" evidence="3">
    <location>
        <position position="26"/>
    </location>
</feature>
<feature type="modified residue" description="Phosphoserine" evidence="9 11 12">
    <location>
        <position position="225"/>
    </location>
</feature>
<feature type="modified residue" description="Phosphothreonine" evidence="3">
    <location>
        <position position="389"/>
    </location>
</feature>
<feature type="modified residue" description="Phosphotyrosine" evidence="2">
    <location>
        <position position="709"/>
    </location>
</feature>
<feature type="modified residue" description="N6-acetyllysine; alternate" evidence="3">
    <location>
        <position position="971"/>
    </location>
</feature>
<feature type="modified residue" description="Phosphothreonine" evidence="3">
    <location>
        <position position="1428"/>
    </location>
</feature>
<feature type="modified residue" description="Phosphothreonine" evidence="10">
    <location>
        <position position="1765"/>
    </location>
</feature>
<feature type="modified residue" description="Phosphoserine" evidence="3">
    <location>
        <position position="2002"/>
    </location>
</feature>
<feature type="modified residue" description="Phosphothreonine" evidence="12">
    <location>
        <position position="2131"/>
    </location>
</feature>
<feature type="modified residue" description="Phosphoserine" evidence="12">
    <location>
        <position position="2133"/>
    </location>
</feature>
<feature type="modified residue" description="Phosphoserine" evidence="12">
    <location>
        <position position="2135"/>
    </location>
</feature>
<feature type="cross-link" description="Glycyl lysine isopeptide (Lys-Gly) (interchain with G-Cter in SUMO2)" evidence="3">
    <location>
        <position position="46"/>
    </location>
</feature>
<feature type="cross-link" description="Glycyl lysine isopeptide (Lys-Gly) (interchain with G-Cter in SUMO)" evidence="1">
    <location>
        <position position="944"/>
    </location>
</feature>
<feature type="cross-link" description="Glycyl lysine isopeptide (Lys-Gly) (interchain with G-Cter in SUMO); alternate" evidence="1">
    <location>
        <position position="971"/>
    </location>
</feature>
<feature type="cross-link" description="Glycyl lysine isopeptide (Lys-Gly) (interchain with G-Cter in SUMO)" evidence="1">
    <location>
        <position position="1071"/>
    </location>
</feature>
<feature type="cross-link" description="Glycyl lysine isopeptide (Lys-Gly) (interchain with G-Cter in SUMO)" evidence="1">
    <location>
        <position position="1199"/>
    </location>
</feature>
<feature type="cross-link" description="Glycyl lysine isopeptide (Lys-Gly) (interchain with G-Cter in SUMO)" evidence="1">
    <location>
        <position position="2091"/>
    </location>
</feature>
<keyword id="KW-0007">Acetylation</keyword>
<keyword id="KW-0067">ATP-binding</keyword>
<keyword id="KW-0175">Coiled coil</keyword>
<keyword id="KW-0347">Helicase</keyword>
<keyword id="KW-0378">Hydrolase</keyword>
<keyword id="KW-1017">Isopeptide bond</keyword>
<keyword id="KW-0507">mRNA processing</keyword>
<keyword id="KW-0508">mRNA splicing</keyword>
<keyword id="KW-0547">Nucleotide-binding</keyword>
<keyword id="KW-0539">Nucleus</keyword>
<keyword id="KW-0597">Phosphoprotein</keyword>
<keyword id="KW-1185">Reference proteome</keyword>
<keyword id="KW-0677">Repeat</keyword>
<keyword id="KW-0687">Ribonucleoprotein</keyword>
<keyword id="KW-0747">Spliceosome</keyword>
<keyword id="KW-0832">Ubl conjugation</keyword>
<reference key="1">
    <citation type="journal article" date="2009" name="PLoS Biol.">
        <title>Lineage-specific biology revealed by a finished genome assembly of the mouse.</title>
        <authorList>
            <person name="Church D.M."/>
            <person name="Goodstadt L."/>
            <person name="Hillier L.W."/>
            <person name="Zody M.C."/>
            <person name="Goldstein S."/>
            <person name="She X."/>
            <person name="Bult C.J."/>
            <person name="Agarwala R."/>
            <person name="Cherry J.L."/>
            <person name="DiCuccio M."/>
            <person name="Hlavina W."/>
            <person name="Kapustin Y."/>
            <person name="Meric P."/>
            <person name="Maglott D."/>
            <person name="Birtle Z."/>
            <person name="Marques A.C."/>
            <person name="Graves T."/>
            <person name="Zhou S."/>
            <person name="Teague B."/>
            <person name="Potamousis K."/>
            <person name="Churas C."/>
            <person name="Place M."/>
            <person name="Herschleb J."/>
            <person name="Runnheim R."/>
            <person name="Forrest D."/>
            <person name="Amos-Landgraf J."/>
            <person name="Schwartz D.C."/>
            <person name="Cheng Z."/>
            <person name="Lindblad-Toh K."/>
            <person name="Eichler E.E."/>
            <person name="Ponting C.P."/>
        </authorList>
    </citation>
    <scope>NUCLEOTIDE SEQUENCE [LARGE SCALE GENOMIC DNA]</scope>
    <source>
        <strain>C57BL/6J</strain>
    </source>
</reference>
<reference key="2">
    <citation type="journal article" date="2004" name="Genome Res.">
        <title>The status, quality, and expansion of the NIH full-length cDNA project: the Mammalian Gene Collection (MGC).</title>
        <authorList>
            <consortium name="The MGC Project Team"/>
        </authorList>
    </citation>
    <scope>NUCLEOTIDE SEQUENCE [LARGE SCALE MRNA]</scope>
    <source>
        <strain>C57BL/6J</strain>
        <tissue>Brain</tissue>
    </source>
</reference>
<reference key="3">
    <citation type="journal article" date="2004" name="DNA Res.">
        <title>Prediction of the coding sequences of mouse homologues of KIAA gene: IV. The complete nucleotide sequences of 500 mouse KIAA-homologous cDNAs identified by screening of terminal sequences of cDNA clones randomly sampled from size-fractionated libraries.</title>
        <authorList>
            <person name="Okazaki N."/>
            <person name="Kikuno R."/>
            <person name="Ohara R."/>
            <person name="Inamoto S."/>
            <person name="Koseki H."/>
            <person name="Hiraoka S."/>
            <person name="Saga Y."/>
            <person name="Seino S."/>
            <person name="Nishimura M."/>
            <person name="Kaisho T."/>
            <person name="Hoshino K."/>
            <person name="Kitamura H."/>
            <person name="Nagase T."/>
            <person name="Ohara O."/>
            <person name="Koga H."/>
        </authorList>
    </citation>
    <scope>NUCLEOTIDE SEQUENCE [LARGE SCALE MRNA] OF 228-2136</scope>
    <source>
        <tissue>Embryonic tail</tissue>
    </source>
</reference>
<reference key="4">
    <citation type="journal article" date="2007" name="Proc. Natl. Acad. Sci. U.S.A.">
        <title>Large-scale phosphorylation analysis of mouse liver.</title>
        <authorList>
            <person name="Villen J."/>
            <person name="Beausoleil S.A."/>
            <person name="Gerber S.A."/>
            <person name="Gygi S.P."/>
        </authorList>
    </citation>
    <scope>PHOSPHORYLATION [LARGE SCALE ANALYSIS] AT SER-225</scope>
    <scope>IDENTIFICATION BY MASS SPECTROMETRY [LARGE SCALE ANALYSIS]</scope>
    <source>
        <tissue>Liver</tissue>
    </source>
</reference>
<reference key="5">
    <citation type="journal article" date="2007" name="Science">
        <title>ATM and ATR substrate analysis reveals extensive protein networks responsive to DNA damage.</title>
        <authorList>
            <person name="Matsuoka S."/>
            <person name="Ballif B.A."/>
            <person name="Smogorzewska A."/>
            <person name="McDonald E.R. III"/>
            <person name="Hurov K.E."/>
            <person name="Luo J."/>
            <person name="Bakalarski C.E."/>
            <person name="Zhao Z."/>
            <person name="Solimini N."/>
            <person name="Lerenthal Y."/>
            <person name="Shiloh Y."/>
            <person name="Gygi S.P."/>
            <person name="Elledge S.J."/>
        </authorList>
    </citation>
    <scope>PHOSPHORYLATION [LARGE SCALE ANALYSIS] AT THR-1765</scope>
    <scope>IDENTIFICATION BY MASS SPECTROMETRY [LARGE SCALE ANALYSIS]</scope>
    <source>
        <tissue>Embryonic fibroblast</tissue>
    </source>
</reference>
<reference key="6">
    <citation type="journal article" date="2008" name="J. Proteome Res.">
        <title>Specific phosphopeptide enrichment with immobilized titanium ion affinity chromatography adsorbent for phosphoproteome analysis.</title>
        <authorList>
            <person name="Zhou H."/>
            <person name="Ye M."/>
            <person name="Dong J."/>
            <person name="Han G."/>
            <person name="Jiang X."/>
            <person name="Wu R."/>
            <person name="Zou H."/>
        </authorList>
    </citation>
    <scope>IDENTIFICATION BY MASS SPECTROMETRY [LARGE SCALE ANALYSIS]</scope>
    <source>
        <tissue>Liver</tissue>
    </source>
</reference>
<reference key="7">
    <citation type="journal article" date="2009" name="Immunity">
        <title>The phagosomal proteome in interferon-gamma-activated macrophages.</title>
        <authorList>
            <person name="Trost M."/>
            <person name="English L."/>
            <person name="Lemieux S."/>
            <person name="Courcelles M."/>
            <person name="Desjardins M."/>
            <person name="Thibault P."/>
        </authorList>
    </citation>
    <scope>PHOSPHORYLATION [LARGE SCALE ANALYSIS] AT SER-225</scope>
    <scope>IDENTIFICATION BY MASS SPECTROMETRY [LARGE SCALE ANALYSIS]</scope>
</reference>
<reference key="8">
    <citation type="journal article" date="2010" name="Cell">
        <title>A tissue-specific atlas of mouse protein phosphorylation and expression.</title>
        <authorList>
            <person name="Huttlin E.L."/>
            <person name="Jedrychowski M.P."/>
            <person name="Elias J.E."/>
            <person name="Goswami T."/>
            <person name="Rad R."/>
            <person name="Beausoleil S.A."/>
            <person name="Villen J."/>
            <person name="Haas W."/>
            <person name="Sowa M.E."/>
            <person name="Gygi S.P."/>
        </authorList>
    </citation>
    <scope>PHOSPHORYLATION [LARGE SCALE ANALYSIS] AT SER-225; THR-2131; SER-2133 AND SER-2135</scope>
    <scope>IDENTIFICATION BY MASS SPECTROMETRY [LARGE SCALE ANALYSIS]</scope>
    <source>
        <tissue>Brain</tissue>
        <tissue>Brown adipose tissue</tissue>
        <tissue>Heart</tissue>
        <tissue>Kidney</tissue>
        <tissue>Liver</tissue>
        <tissue>Lung</tissue>
        <tissue>Pancreas</tissue>
        <tissue>Spleen</tissue>
        <tissue>Testis</tissue>
    </source>
</reference>
<protein>
    <recommendedName>
        <fullName>U5 small nuclear ribonucleoprotein 200 kDa helicase</fullName>
        <ecNumber evidence="3">3.6.4.13</ecNumber>
    </recommendedName>
    <alternativeName>
        <fullName>BRR2 homolog</fullName>
    </alternativeName>
    <alternativeName>
        <fullName>U5 snRNP-specific 200 kDa protein</fullName>
        <shortName>U5-200KD</shortName>
    </alternativeName>
</protein>
<organism>
    <name type="scientific">Mus musculus</name>
    <name type="common">Mouse</name>
    <dbReference type="NCBI Taxonomy" id="10090"/>
    <lineage>
        <taxon>Eukaryota</taxon>
        <taxon>Metazoa</taxon>
        <taxon>Chordata</taxon>
        <taxon>Craniata</taxon>
        <taxon>Vertebrata</taxon>
        <taxon>Euteleostomi</taxon>
        <taxon>Mammalia</taxon>
        <taxon>Eutheria</taxon>
        <taxon>Euarchontoglires</taxon>
        <taxon>Glires</taxon>
        <taxon>Rodentia</taxon>
        <taxon>Myomorpha</taxon>
        <taxon>Muroidea</taxon>
        <taxon>Muridae</taxon>
        <taxon>Murinae</taxon>
        <taxon>Mus</taxon>
        <taxon>Mus</taxon>
    </lineage>
</organism>
<accession>Q6P4T2</accession>
<accession>Q69ZZ3</accession>
<gene>
    <name type="primary">Snrnp200</name>
    <name type="synonym">Kiaa0788</name>
</gene>
<proteinExistence type="evidence at protein level"/>
<sequence length="2136" mass="244547">MADVTARSLQYEYKANSNLVLQADRSLIDRTRRDEPTGEVLSLVGKLEGTRMGDKAQRTKPQMQEERRAKRRKRDEDRHDMNKMKGYTLLSEGIDEMVGIIYKPKTKETRETYEVLLSFIQAALGDQPRDILCGAADEVLAVLKNEKLRDKERRREIDLLLGQTDDTRYHVLVNLGKKITDYGGDKEIQNMDDNIDETYGVNVQFESDEEEGDEDVYGEVREEASDDDMEGDEAVVRCTLSANLVASGELMSSKKKDLHPRDIDAFWLQRQLSRFYDDAIVSQKKADEVLEILKTASDDRECENQLVLLLGFNTFDFIKVLRQHRMMILYCTLLASAQSEPEKERIVGKMEADPELSKFLYQLHETEKEDLIREERSRRERVRQSRMDTDLETMDLDQGGEALAPRQVLDLEDLVFTQGSHFMANKRCQLPDGSFRRQRKGYEEVHVPALKPKPFGSEEQLLPVEKLPKYAQAGFEGFKTLNRIQSKLYRAALETDENLLLCAPTGAGKTNVALMCMLREIGKHINMDGTINVDDFKIIYIAPMRSLVQEMVGSFGKRLATYGITVAELTGDHQLCKEEISATQIIVCTPEKWDIITRKGGERTYTQLVRLIVLDEIHLLHDDRGPVLEALVARAIRNIEMTQEDVRLIGLSATLPNYEDVATFLRVDPAKGLFYFDNSFRPVPLEQTYVGITEKKAIKRFQIMNEIVYEKIMEHAGKNQVLVFVHSRKETGKTARAIRDMCLEKDTLGLFLREGSASTEVLRTEAEQCKNLELKDLLPYGFAIHHAGMTRVDRTLVEDLFADKHIQVLVSTATLAWGVNLPAHTVIIKGTQVYSPEKGRWTELGALDILQMLGRAGRPQYDTKGEGILITSHGELQYYLSLLNQQLPIESQMVSKLPDMLNAEIVLGNVQNAKDAVNWLGYAYLYIRMLRSPTLYGISHDDLKGDPLLDQRRLDLVHTAALMLDKNNLVKYDKKTGNFQVTELGRIASHYYITNDTVQTYNQLLKPTLSEIELFRVFSLSSEFKNITVREEEKLELQKLLERVPIPVKESIEEPSAKINVLLQAFISQLKLEGFALMADMVYVTQSAGRLMRAIFEIVLNRGWAQLTDKTLNLCKMIDKRMWQSMCPLRQFRKLPEEVVKKIEKKNFPFERLYDLNHNEIGELIRMPKMGKTIHKYVHLFPKLELSVHLQPITRSTLKVELTITPDFQWDEKVHGSSEAFWILVEDVDSEVILHHEYFLLKAKYAQDEHLITFFVPVFEPLPPQYFIRVVSDRWLSCETQLPVSFRHLILPEKYPPPTELLDLQPLPVSALRNSAFESLYQDKFPFFNPIQTQVFNTVYNSDDNVFVGAPTGSGKTICAEFAILRMLLQNSEGRCVYITPMEALAEQVYMDWYEKFQDRLNKKVVLLTGETSTDLKLLGKGNIIISTPEKWDILSRRWKQRKNVQNINLFVVDEVHLIGGENGPVLEVICSRMRYISSQIERPIRIVALSSSLSNAKDVAHWLGCSATSTFNFHPNVRPVPLELHIQGFNISHTQTRLLSMAKPVYHAITKHSPKKPVIVFVPSRKQTRLTAIDILTTCAADIQRQRFLHCTEKDLIPYLEKLSDSTLKETLLNGVGYLHEGLSPMERRLVEQLFSSGAIQVVVASRSLCWGMNVAAHLVIIMDTQYYNGKIHAYVDYPIYDVLQMVGHANRPLQDDEGRCVIMCQGSKKDFFKKFLYEPLPVESHLDHCMHDHFNAEIVTKTIENKQDAVDYLTWTFLYRRMTQNPNYYNLQGISHRHLSDHLSELVEQTLSDLEQSKCISIEDEMDVAPLNLGMIAAYYYINYTTIELFSMSLNAKTKVRGLIEIISNAAEYENIPIRHHEDNLLRQLAQKVPHKLNNPKFNDPHVKTNLLLQAHLSRMQLSAELQSDTEEILSKAIRLIQACVDVLSSNGWLSPALAAMELAQMVTQAMWSKDSYLKQLPHFTSEHIKRCTDKGVESVFDIMEMEDEERNALLQLTDSQIADVARFCNRYPNIELSYEVVDKDSIRSGGPVVVLVQLEREEEVTGPVIAPLFPQKREEGWWVVIGDAKSNSLISIKRLTLQQKAKVKLDFVAPATGGHNYTLYFMSDAYMGCDQEYKFSVDVKEAETDSDSD</sequence>
<dbReference type="EC" id="3.6.4.13" evidence="3"/>
<dbReference type="EMBL" id="AL845368">
    <property type="status" value="NOT_ANNOTATED_CDS"/>
    <property type="molecule type" value="Genomic_DNA"/>
</dbReference>
<dbReference type="EMBL" id="BC063261">
    <property type="protein sequence ID" value="AAH63261.1"/>
    <property type="molecule type" value="mRNA"/>
</dbReference>
<dbReference type="EMBL" id="AK173025">
    <property type="protein sequence ID" value="BAD32303.1"/>
    <property type="molecule type" value="mRNA"/>
</dbReference>
<dbReference type="CCDS" id="CCDS16695.1"/>
<dbReference type="RefSeq" id="NP_796188.2">
    <property type="nucleotide sequence ID" value="NM_177214.4"/>
</dbReference>
<dbReference type="SMR" id="Q6P4T2"/>
<dbReference type="BioGRID" id="236173">
    <property type="interactions" value="67"/>
</dbReference>
<dbReference type="FunCoup" id="Q6P4T2">
    <property type="interactions" value="4636"/>
</dbReference>
<dbReference type="IntAct" id="Q6P4T2">
    <property type="interactions" value="8"/>
</dbReference>
<dbReference type="MINT" id="Q6P4T2"/>
<dbReference type="STRING" id="10090.ENSMUSP00000099509"/>
<dbReference type="GlyGen" id="Q6P4T2">
    <property type="glycosylation" value="1 site, 1 O-linked glycan (1 site)"/>
</dbReference>
<dbReference type="iPTMnet" id="Q6P4T2"/>
<dbReference type="PhosphoSitePlus" id="Q6P4T2"/>
<dbReference type="SwissPalm" id="Q6P4T2"/>
<dbReference type="jPOST" id="Q6P4T2"/>
<dbReference type="PaxDb" id="10090-ENSMUSP00000099509"/>
<dbReference type="PeptideAtlas" id="Q6P4T2"/>
<dbReference type="ProteomicsDB" id="298056"/>
<dbReference type="Pumba" id="Q6P4T2"/>
<dbReference type="Antibodypedia" id="32425">
    <property type="antibodies" value="78 antibodies from 21 providers"/>
</dbReference>
<dbReference type="DNASU" id="320632"/>
<dbReference type="Ensembl" id="ENSMUST00000103220.4">
    <property type="protein sequence ID" value="ENSMUSP00000099509.4"/>
    <property type="gene ID" value="ENSMUSG00000003660.11"/>
</dbReference>
<dbReference type="GeneID" id="320632"/>
<dbReference type="KEGG" id="mmu:320632"/>
<dbReference type="UCSC" id="uc008mez.1">
    <property type="organism name" value="mouse"/>
</dbReference>
<dbReference type="AGR" id="MGI:2444401"/>
<dbReference type="CTD" id="23020"/>
<dbReference type="MGI" id="MGI:2444401">
    <property type="gene designation" value="Snrnp200"/>
</dbReference>
<dbReference type="VEuPathDB" id="HostDB:ENSMUSG00000003660"/>
<dbReference type="eggNOG" id="KOG0951">
    <property type="taxonomic scope" value="Eukaryota"/>
</dbReference>
<dbReference type="GeneTree" id="ENSGT00940000154966"/>
<dbReference type="HOGENOM" id="CLU_000335_2_1_1"/>
<dbReference type="InParanoid" id="Q6P4T2"/>
<dbReference type="OMA" id="MNPKEFN"/>
<dbReference type="OrthoDB" id="5575at2759"/>
<dbReference type="PhylomeDB" id="Q6P4T2"/>
<dbReference type="TreeFam" id="TF300056"/>
<dbReference type="Reactome" id="R-MMU-72163">
    <property type="pathway name" value="mRNA Splicing - Major Pathway"/>
</dbReference>
<dbReference type="Reactome" id="R-MMU-72165">
    <property type="pathway name" value="mRNA Splicing - Minor Pathway"/>
</dbReference>
<dbReference type="BioGRID-ORCS" id="320632">
    <property type="hits" value="27 hits in 75 CRISPR screens"/>
</dbReference>
<dbReference type="ChiTaRS" id="Snrnp200">
    <property type="organism name" value="mouse"/>
</dbReference>
<dbReference type="PRO" id="PR:Q6P4T2"/>
<dbReference type="Proteomes" id="UP000000589">
    <property type="component" value="Chromosome 2"/>
</dbReference>
<dbReference type="RNAct" id="Q6P4T2">
    <property type="molecule type" value="protein"/>
</dbReference>
<dbReference type="Bgee" id="ENSMUSG00000003660">
    <property type="expression patterns" value="Expressed in manus and 223 other cell types or tissues"/>
</dbReference>
<dbReference type="GO" id="GO:0071013">
    <property type="term" value="C:catalytic step 2 spliceosome"/>
    <property type="evidence" value="ECO:0007669"/>
    <property type="project" value="Ensembl"/>
</dbReference>
<dbReference type="GO" id="GO:0005929">
    <property type="term" value="C:cilium"/>
    <property type="evidence" value="ECO:0007669"/>
    <property type="project" value="Ensembl"/>
</dbReference>
<dbReference type="GO" id="GO:0005654">
    <property type="term" value="C:nucleoplasm"/>
    <property type="evidence" value="ECO:0007669"/>
    <property type="project" value="Ensembl"/>
</dbReference>
<dbReference type="GO" id="GO:0005634">
    <property type="term" value="C:nucleus"/>
    <property type="evidence" value="ECO:0000250"/>
    <property type="project" value="UniProtKB"/>
</dbReference>
<dbReference type="GO" id="GO:0005886">
    <property type="term" value="C:plasma membrane"/>
    <property type="evidence" value="ECO:0007669"/>
    <property type="project" value="Ensembl"/>
</dbReference>
<dbReference type="GO" id="GO:0071006">
    <property type="term" value="C:U2-type catalytic step 1 spliceosome"/>
    <property type="evidence" value="ECO:0000250"/>
    <property type="project" value="UniProtKB"/>
</dbReference>
<dbReference type="GO" id="GO:0071005">
    <property type="term" value="C:U2-type precatalytic spliceosome"/>
    <property type="evidence" value="ECO:0000250"/>
    <property type="project" value="UniProtKB"/>
</dbReference>
<dbReference type="GO" id="GO:0046540">
    <property type="term" value="C:U4/U6 x U5 tri-snRNP complex"/>
    <property type="evidence" value="ECO:0007669"/>
    <property type="project" value="Ensembl"/>
</dbReference>
<dbReference type="GO" id="GO:0005682">
    <property type="term" value="C:U5 snRNP"/>
    <property type="evidence" value="ECO:0007669"/>
    <property type="project" value="Ensembl"/>
</dbReference>
<dbReference type="GO" id="GO:0005524">
    <property type="term" value="F:ATP binding"/>
    <property type="evidence" value="ECO:0007669"/>
    <property type="project" value="UniProtKB-KW"/>
</dbReference>
<dbReference type="GO" id="GO:0016887">
    <property type="term" value="F:ATP hydrolysis activity"/>
    <property type="evidence" value="ECO:0007669"/>
    <property type="project" value="RHEA"/>
</dbReference>
<dbReference type="GO" id="GO:0042802">
    <property type="term" value="F:identical protein binding"/>
    <property type="evidence" value="ECO:0007669"/>
    <property type="project" value="Ensembl"/>
</dbReference>
<dbReference type="GO" id="GO:0003676">
    <property type="term" value="F:nucleic acid binding"/>
    <property type="evidence" value="ECO:0007669"/>
    <property type="project" value="InterPro"/>
</dbReference>
<dbReference type="GO" id="GO:0003724">
    <property type="term" value="F:RNA helicase activity"/>
    <property type="evidence" value="ECO:0000250"/>
    <property type="project" value="UniProtKB"/>
</dbReference>
<dbReference type="GO" id="GO:0000398">
    <property type="term" value="P:mRNA splicing, via spliceosome"/>
    <property type="evidence" value="ECO:0000250"/>
    <property type="project" value="UniProtKB"/>
</dbReference>
<dbReference type="GO" id="GO:0000388">
    <property type="term" value="P:spliceosome conformational change to release U4 (or U4atac) and U1 (or U11)"/>
    <property type="evidence" value="ECO:0007669"/>
    <property type="project" value="Ensembl"/>
</dbReference>
<dbReference type="CDD" id="cd18019">
    <property type="entry name" value="DEXHc_Brr2_1"/>
    <property type="match status" value="1"/>
</dbReference>
<dbReference type="CDD" id="cd18021">
    <property type="entry name" value="DEXHc_Brr2_2"/>
    <property type="match status" value="1"/>
</dbReference>
<dbReference type="CDD" id="cd18795">
    <property type="entry name" value="SF2_C_Ski2"/>
    <property type="match status" value="2"/>
</dbReference>
<dbReference type="FunFam" id="2.60.40.150:FF:000004">
    <property type="entry name" value="RNA helicase, activating signal cointegrator 1"/>
    <property type="match status" value="1"/>
</dbReference>
<dbReference type="FunFam" id="1.10.3380.10:FF:000004">
    <property type="entry name" value="U5 small nuclear ribonucleoprotein 200 kDa helicase"/>
    <property type="match status" value="1"/>
</dbReference>
<dbReference type="FunFam" id="2.60.40.150:FF:000048">
    <property type="entry name" value="U5 small nuclear ribonucleoprotein 200 kDa helicase"/>
    <property type="match status" value="1"/>
</dbReference>
<dbReference type="FunFam" id="3.40.50.300:FF:000368">
    <property type="entry name" value="U5 small nuclear ribonucleoprotein 200 kDa helicase"/>
    <property type="match status" value="1"/>
</dbReference>
<dbReference type="FunFam" id="3.40.50.300:FF:003287">
    <property type="entry name" value="U5 small nuclear ribonucleoprotein 200 kDa helicase"/>
    <property type="match status" value="1"/>
</dbReference>
<dbReference type="FunFam" id="1.10.10.10:FF:000012">
    <property type="entry name" value="U5 small nuclear ribonucleoprotein helicase"/>
    <property type="match status" value="1"/>
</dbReference>
<dbReference type="FunFam" id="1.10.10.10:FF:000024">
    <property type="entry name" value="U5 small nuclear ribonucleoprotein helicase"/>
    <property type="match status" value="1"/>
</dbReference>
<dbReference type="FunFam" id="1.10.150.20:FF:000004">
    <property type="entry name" value="U5 small nuclear ribonucleoprotein helicase"/>
    <property type="match status" value="1"/>
</dbReference>
<dbReference type="FunFam" id="1.10.3380.10:FF:000001">
    <property type="entry name" value="U5 small nuclear ribonucleoprotein helicase"/>
    <property type="match status" value="1"/>
</dbReference>
<dbReference type="FunFam" id="3.40.50.300:FF:000062">
    <property type="entry name" value="U5 small nuclear ribonucleoprotein helicase"/>
    <property type="match status" value="1"/>
</dbReference>
<dbReference type="FunFam" id="3.40.50.300:FF:000254">
    <property type="entry name" value="U5 small nuclear ribonucleoprotein helicase"/>
    <property type="match status" value="1"/>
</dbReference>
<dbReference type="FunFam" id="1.10.150.20:FF:000013">
    <property type="entry name" value="U5 small nuclear ribonucleoprotein kDa helicase"/>
    <property type="match status" value="1"/>
</dbReference>
<dbReference type="Gene3D" id="1.10.150.20">
    <property type="entry name" value="5' to 3' exonuclease, C-terminal subdomain"/>
    <property type="match status" value="2"/>
</dbReference>
<dbReference type="Gene3D" id="2.60.40.150">
    <property type="entry name" value="C2 domain"/>
    <property type="match status" value="2"/>
</dbReference>
<dbReference type="Gene3D" id="3.40.50.300">
    <property type="entry name" value="P-loop containing nucleotide triphosphate hydrolases"/>
    <property type="match status" value="4"/>
</dbReference>
<dbReference type="Gene3D" id="1.10.3380.10">
    <property type="entry name" value="Sec63 N-terminal domain-like domain"/>
    <property type="match status" value="2"/>
</dbReference>
<dbReference type="Gene3D" id="1.10.10.10">
    <property type="entry name" value="Winged helix-like DNA-binding domain superfamily/Winged helix DNA-binding domain"/>
    <property type="match status" value="2"/>
</dbReference>
<dbReference type="InterPro" id="IPR041094">
    <property type="entry name" value="Brr2_helicase_PWI"/>
</dbReference>
<dbReference type="InterPro" id="IPR048863">
    <property type="entry name" value="BRR2_plug"/>
</dbReference>
<dbReference type="InterPro" id="IPR035892">
    <property type="entry name" value="C2_domain_sf"/>
</dbReference>
<dbReference type="InterPro" id="IPR011545">
    <property type="entry name" value="DEAD/DEAH_box_helicase_dom"/>
</dbReference>
<dbReference type="InterPro" id="IPR050474">
    <property type="entry name" value="Hel308_SKI2-like"/>
</dbReference>
<dbReference type="InterPro" id="IPR014001">
    <property type="entry name" value="Helicase_ATP-bd"/>
</dbReference>
<dbReference type="InterPro" id="IPR001650">
    <property type="entry name" value="Helicase_C-like"/>
</dbReference>
<dbReference type="InterPro" id="IPR014756">
    <property type="entry name" value="Ig_E-set"/>
</dbReference>
<dbReference type="InterPro" id="IPR027417">
    <property type="entry name" value="P-loop_NTPase"/>
</dbReference>
<dbReference type="InterPro" id="IPR004179">
    <property type="entry name" value="Sec63-dom"/>
</dbReference>
<dbReference type="InterPro" id="IPR036388">
    <property type="entry name" value="WH-like_DNA-bd_sf"/>
</dbReference>
<dbReference type="InterPro" id="IPR036390">
    <property type="entry name" value="WH_DNA-bd_sf"/>
</dbReference>
<dbReference type="PANTHER" id="PTHR47961:SF4">
    <property type="entry name" value="ACTIVATING SIGNAL COINTEGRATOR 1 COMPLEX SUBUNIT 3"/>
    <property type="match status" value="1"/>
</dbReference>
<dbReference type="PANTHER" id="PTHR47961">
    <property type="entry name" value="DNA POLYMERASE THETA, PUTATIVE (AFU_ORTHOLOGUE AFUA_1G05260)-RELATED"/>
    <property type="match status" value="1"/>
</dbReference>
<dbReference type="Pfam" id="PF21188">
    <property type="entry name" value="BRR2_plug"/>
    <property type="match status" value="1"/>
</dbReference>
<dbReference type="Pfam" id="PF00270">
    <property type="entry name" value="DEAD"/>
    <property type="match status" value="2"/>
</dbReference>
<dbReference type="Pfam" id="PF00271">
    <property type="entry name" value="Helicase_C"/>
    <property type="match status" value="1"/>
</dbReference>
<dbReference type="Pfam" id="PF18149">
    <property type="entry name" value="Helicase_PWI"/>
    <property type="match status" value="1"/>
</dbReference>
<dbReference type="Pfam" id="PF02889">
    <property type="entry name" value="Sec63"/>
    <property type="match status" value="2"/>
</dbReference>
<dbReference type="Pfam" id="PF23445">
    <property type="entry name" value="SNRNP200_wHTH"/>
    <property type="match status" value="2"/>
</dbReference>
<dbReference type="PIRSF" id="PIRSF039073">
    <property type="entry name" value="BRR2"/>
    <property type="match status" value="1"/>
</dbReference>
<dbReference type="SMART" id="SM00487">
    <property type="entry name" value="DEXDc"/>
    <property type="match status" value="2"/>
</dbReference>
<dbReference type="SMART" id="SM00490">
    <property type="entry name" value="HELICc"/>
    <property type="match status" value="2"/>
</dbReference>
<dbReference type="SMART" id="SM00973">
    <property type="entry name" value="Sec63"/>
    <property type="match status" value="2"/>
</dbReference>
<dbReference type="SUPFAM" id="SSF81296">
    <property type="entry name" value="E set domains"/>
    <property type="match status" value="1"/>
</dbReference>
<dbReference type="SUPFAM" id="SSF52540">
    <property type="entry name" value="P-loop containing nucleoside triphosphate hydrolases"/>
    <property type="match status" value="4"/>
</dbReference>
<dbReference type="SUPFAM" id="SSF158702">
    <property type="entry name" value="Sec63 N-terminal domain-like"/>
    <property type="match status" value="2"/>
</dbReference>
<dbReference type="SUPFAM" id="SSF46785">
    <property type="entry name" value="Winged helix' DNA-binding domain"/>
    <property type="match status" value="2"/>
</dbReference>
<dbReference type="PROSITE" id="PS51192">
    <property type="entry name" value="HELICASE_ATP_BIND_1"/>
    <property type="match status" value="2"/>
</dbReference>
<dbReference type="PROSITE" id="PS51194">
    <property type="entry name" value="HELICASE_CTER"/>
    <property type="match status" value="2"/>
</dbReference>
<evidence type="ECO:0000250" key="1"/>
<evidence type="ECO:0000250" key="2">
    <source>
        <dbReference type="UniProtKB" id="F1LNJ2"/>
    </source>
</evidence>
<evidence type="ECO:0000250" key="3">
    <source>
        <dbReference type="UniProtKB" id="O75643"/>
    </source>
</evidence>
<evidence type="ECO:0000255" key="4"/>
<evidence type="ECO:0000255" key="5">
    <source>
        <dbReference type="PROSITE-ProRule" id="PRU00541"/>
    </source>
</evidence>
<evidence type="ECO:0000255" key="6">
    <source>
        <dbReference type="PROSITE-ProRule" id="PRU00542"/>
    </source>
</evidence>
<evidence type="ECO:0000256" key="7">
    <source>
        <dbReference type="SAM" id="MobiDB-lite"/>
    </source>
</evidence>
<evidence type="ECO:0000305" key="8"/>
<evidence type="ECO:0007744" key="9">
    <source>
    </source>
</evidence>
<evidence type="ECO:0007744" key="10">
    <source>
    </source>
</evidence>
<evidence type="ECO:0007744" key="11">
    <source>
    </source>
</evidence>
<evidence type="ECO:0007744" key="12">
    <source>
    </source>
</evidence>
<comment type="function">
    <text evidence="3">Catalyzes the ATP-dependent unwinding of U4/U6 RNA duplices, an essential step in the assembly of a catalytically active spliceosome. Plays a role in pre-mRNA splicing as core component of precatalytic, catalytic and postcatalytic spliceosomal complexes. As a component of the minor spliceosome, involved in the splicing of U12-type introns in pre-mRNAs (By similarity). Involved in spliceosome assembly, activation and disassembly. Mediates changes in the dynamic network of RNA-RNA interactions in the spliceosome.</text>
</comment>
<comment type="catalytic activity">
    <reaction evidence="3">
        <text>ATP + H2O = ADP + phosphate + H(+)</text>
        <dbReference type="Rhea" id="RHEA:13065"/>
        <dbReference type="ChEBI" id="CHEBI:15377"/>
        <dbReference type="ChEBI" id="CHEBI:15378"/>
        <dbReference type="ChEBI" id="CHEBI:30616"/>
        <dbReference type="ChEBI" id="CHEBI:43474"/>
        <dbReference type="ChEBI" id="CHEBI:456216"/>
        <dbReference type="EC" id="3.6.4.13"/>
    </reaction>
</comment>
<comment type="subunit">
    <text evidence="3">Component of a core complex containing at least PRPF8, SNRNP200, EFTUD2 and SNRNP40. Component of the U5 snRNP and U4/U6-U5 tri-snRNP complexes, building blocks of the spliceosome. Component of the U4/U6-U5 tri-snRNP complex composed of the U4, U6 and U5 snRNAs and at least PRPF3, PRPF4, PRPF6, PRPF8, PRPF31, SNRNP200, TXNL4A, SNRNP40, DDX23, CD2BP2, PPIH, SNU13, EFTUD2, SART1 and USP39. Component of precatalytic, catalytic and postcatalytic spliceosomal complexes. Component of the minor spliceosome, which splices U12-type introns (By similarity). Interacts with C9orf78; the interaction is direct and mutually exclusive with its interaction with WBP4. Interacts with WBP4; the interaction is mutually exclusive with its interaction with C9orf78. Interacts with PRPF8. Interacts with TSSC4; the interaction is direct, excludes recruitment of C9ORF78 and WBP4 to SNRNP200 and negatively regulates its RNA helicase activity (By similarity).</text>
</comment>
<comment type="subcellular location">
    <subcellularLocation>
        <location evidence="3">Nucleus</location>
    </subcellularLocation>
</comment>
<comment type="domain">
    <text evidence="3">Contains two helicase domains. The N-terminal helicase domain has catalytic activity by itself, contrary to C-terminal helicase domain that may have a regulatory role and enhance the activity of the first helicase domain.</text>
</comment>
<comment type="similarity">
    <text evidence="8">Belongs to the helicase family. SKI2 subfamily.</text>
</comment>